<feature type="chain" id="PRO_0000274019" description="Peptidase T">
    <location>
        <begin position="1"/>
        <end position="408"/>
    </location>
</feature>
<feature type="active site" evidence="1">
    <location>
        <position position="80"/>
    </location>
</feature>
<feature type="active site" description="Proton acceptor" evidence="1">
    <location>
        <position position="173"/>
    </location>
</feature>
<feature type="binding site" evidence="1">
    <location>
        <position position="78"/>
    </location>
    <ligand>
        <name>Zn(2+)</name>
        <dbReference type="ChEBI" id="CHEBI:29105"/>
        <label>1</label>
    </ligand>
</feature>
<feature type="binding site" evidence="1">
    <location>
        <position position="140"/>
    </location>
    <ligand>
        <name>Zn(2+)</name>
        <dbReference type="ChEBI" id="CHEBI:29105"/>
        <label>1</label>
    </ligand>
</feature>
<feature type="binding site" evidence="1">
    <location>
        <position position="140"/>
    </location>
    <ligand>
        <name>Zn(2+)</name>
        <dbReference type="ChEBI" id="CHEBI:29105"/>
        <label>2</label>
    </ligand>
</feature>
<feature type="binding site" evidence="1">
    <location>
        <position position="174"/>
    </location>
    <ligand>
        <name>Zn(2+)</name>
        <dbReference type="ChEBI" id="CHEBI:29105"/>
        <label>2</label>
    </ligand>
</feature>
<feature type="binding site" evidence="1">
    <location>
        <position position="196"/>
    </location>
    <ligand>
        <name>Zn(2+)</name>
        <dbReference type="ChEBI" id="CHEBI:29105"/>
        <label>1</label>
    </ligand>
</feature>
<feature type="binding site" evidence="1">
    <location>
        <position position="379"/>
    </location>
    <ligand>
        <name>Zn(2+)</name>
        <dbReference type="ChEBI" id="CHEBI:29105"/>
        <label>2</label>
    </ligand>
</feature>
<dbReference type="EC" id="3.4.11.4" evidence="1"/>
<dbReference type="EMBL" id="CP000034">
    <property type="protein sequence ID" value="ABB62120.1"/>
    <property type="molecule type" value="Genomic_DNA"/>
</dbReference>
<dbReference type="RefSeq" id="WP_000359446.1">
    <property type="nucleotide sequence ID" value="NC_007606.1"/>
</dbReference>
<dbReference type="RefSeq" id="YP_403611.1">
    <property type="nucleotide sequence ID" value="NC_007606.1"/>
</dbReference>
<dbReference type="SMR" id="Q32EY5"/>
<dbReference type="STRING" id="300267.SDY_2025"/>
<dbReference type="MEROPS" id="M20.003"/>
<dbReference type="EnsemblBacteria" id="ABB62120">
    <property type="protein sequence ID" value="ABB62120"/>
    <property type="gene ID" value="SDY_2025"/>
</dbReference>
<dbReference type="GeneID" id="93776283"/>
<dbReference type="KEGG" id="sdy:SDY_2025"/>
<dbReference type="PATRIC" id="fig|300267.13.peg.2438"/>
<dbReference type="HOGENOM" id="CLU_053676_0_0_6"/>
<dbReference type="Proteomes" id="UP000002716">
    <property type="component" value="Chromosome"/>
</dbReference>
<dbReference type="GO" id="GO:0005829">
    <property type="term" value="C:cytosol"/>
    <property type="evidence" value="ECO:0007669"/>
    <property type="project" value="TreeGrafter"/>
</dbReference>
<dbReference type="GO" id="GO:0008237">
    <property type="term" value="F:metallopeptidase activity"/>
    <property type="evidence" value="ECO:0007669"/>
    <property type="project" value="UniProtKB-KW"/>
</dbReference>
<dbReference type="GO" id="GO:0045148">
    <property type="term" value="F:tripeptide aminopeptidase activity"/>
    <property type="evidence" value="ECO:0007669"/>
    <property type="project" value="UniProtKB-UniRule"/>
</dbReference>
<dbReference type="GO" id="GO:0008270">
    <property type="term" value="F:zinc ion binding"/>
    <property type="evidence" value="ECO:0007669"/>
    <property type="project" value="UniProtKB-UniRule"/>
</dbReference>
<dbReference type="GO" id="GO:0043171">
    <property type="term" value="P:peptide catabolic process"/>
    <property type="evidence" value="ECO:0007669"/>
    <property type="project" value="UniProtKB-UniRule"/>
</dbReference>
<dbReference type="GO" id="GO:0006508">
    <property type="term" value="P:proteolysis"/>
    <property type="evidence" value="ECO:0007669"/>
    <property type="project" value="UniProtKB-UniRule"/>
</dbReference>
<dbReference type="CDD" id="cd03892">
    <property type="entry name" value="M20_peptT"/>
    <property type="match status" value="1"/>
</dbReference>
<dbReference type="FunFam" id="3.30.70.360:FF:000002">
    <property type="entry name" value="Peptidase T"/>
    <property type="match status" value="1"/>
</dbReference>
<dbReference type="Gene3D" id="3.30.70.360">
    <property type="match status" value="1"/>
</dbReference>
<dbReference type="Gene3D" id="3.40.630.10">
    <property type="entry name" value="Zn peptidases"/>
    <property type="match status" value="1"/>
</dbReference>
<dbReference type="HAMAP" id="MF_00550">
    <property type="entry name" value="Aminopeptidase_M20"/>
    <property type="match status" value="1"/>
</dbReference>
<dbReference type="InterPro" id="IPR001261">
    <property type="entry name" value="ArgE/DapE_CS"/>
</dbReference>
<dbReference type="InterPro" id="IPR036264">
    <property type="entry name" value="Bact_exopeptidase_dim_dom"/>
</dbReference>
<dbReference type="InterPro" id="IPR002933">
    <property type="entry name" value="Peptidase_M20"/>
</dbReference>
<dbReference type="InterPro" id="IPR011650">
    <property type="entry name" value="Peptidase_M20_dimer"/>
</dbReference>
<dbReference type="InterPro" id="IPR010161">
    <property type="entry name" value="Peptidase_M20B"/>
</dbReference>
<dbReference type="NCBIfam" id="TIGR01882">
    <property type="entry name" value="peptidase-T"/>
    <property type="match status" value="1"/>
</dbReference>
<dbReference type="NCBIfam" id="NF003976">
    <property type="entry name" value="PRK05469.1"/>
    <property type="match status" value="1"/>
</dbReference>
<dbReference type="NCBIfam" id="NF009920">
    <property type="entry name" value="PRK13381.1"/>
    <property type="match status" value="1"/>
</dbReference>
<dbReference type="PANTHER" id="PTHR42994">
    <property type="entry name" value="PEPTIDASE T"/>
    <property type="match status" value="1"/>
</dbReference>
<dbReference type="PANTHER" id="PTHR42994:SF1">
    <property type="entry name" value="PEPTIDASE T"/>
    <property type="match status" value="1"/>
</dbReference>
<dbReference type="Pfam" id="PF07687">
    <property type="entry name" value="M20_dimer"/>
    <property type="match status" value="1"/>
</dbReference>
<dbReference type="Pfam" id="PF01546">
    <property type="entry name" value="Peptidase_M20"/>
    <property type="match status" value="1"/>
</dbReference>
<dbReference type="PIRSF" id="PIRSF037215">
    <property type="entry name" value="Peptidase_M20B"/>
    <property type="match status" value="1"/>
</dbReference>
<dbReference type="SUPFAM" id="SSF55031">
    <property type="entry name" value="Bacterial exopeptidase dimerisation domain"/>
    <property type="match status" value="1"/>
</dbReference>
<dbReference type="SUPFAM" id="SSF53187">
    <property type="entry name" value="Zn-dependent exopeptidases"/>
    <property type="match status" value="1"/>
</dbReference>
<dbReference type="PROSITE" id="PS00758">
    <property type="entry name" value="ARGE_DAPE_CPG2_1"/>
    <property type="match status" value="1"/>
</dbReference>
<dbReference type="PROSITE" id="PS00759">
    <property type="entry name" value="ARGE_DAPE_CPG2_2"/>
    <property type="match status" value="1"/>
</dbReference>
<organism>
    <name type="scientific">Shigella dysenteriae serotype 1 (strain Sd197)</name>
    <dbReference type="NCBI Taxonomy" id="300267"/>
    <lineage>
        <taxon>Bacteria</taxon>
        <taxon>Pseudomonadati</taxon>
        <taxon>Pseudomonadota</taxon>
        <taxon>Gammaproteobacteria</taxon>
        <taxon>Enterobacterales</taxon>
        <taxon>Enterobacteriaceae</taxon>
        <taxon>Shigella</taxon>
    </lineage>
</organism>
<sequence length="408" mass="44909">MDKLLERFLNYVSLDTQSKAGVRQVPSTEGQWKLLHLLKEQLEEMGLINVTLSEKGTLMATLPANVPGDIPAIGFISHVDTSPDCSGKNVNPQIVENYRGGDIALGIGDEVLSPVMFPVLHQLLGQTLITTDGKTLLGADDKAGIAEIMTALAVLQQKNIPHGDIRVAFTPDEEVGKGAKHFDVDAFDARWAYTVDGGGVGELEFENFNAASVNIKIVGNNVHPGTAKGVMVNALSLAARIHAEVPADESPEMTEGYEGFYHLASMKGTVERADMHYIIRDFDRKQFEARKRKMMEIAKKVGKGLHPDCYIELVIEDSYYNMREKVVEHPHILDIAQQAMRDCDIEPELKPIRGGTDGAQLSFMGLPCPNLFTGGYNYHGKHEFVTLEGMEKAVQVIVRIAELTAQRK</sequence>
<gene>
    <name evidence="1" type="primary">pepT</name>
    <name type="ordered locus">SDY_2025</name>
</gene>
<keyword id="KW-0031">Aminopeptidase</keyword>
<keyword id="KW-0963">Cytoplasm</keyword>
<keyword id="KW-0378">Hydrolase</keyword>
<keyword id="KW-0479">Metal-binding</keyword>
<keyword id="KW-0482">Metalloprotease</keyword>
<keyword id="KW-0645">Protease</keyword>
<keyword id="KW-1185">Reference proteome</keyword>
<keyword id="KW-0862">Zinc</keyword>
<comment type="function">
    <text evidence="1">Cleaves the N-terminal amino acid of tripeptides.</text>
</comment>
<comment type="catalytic activity">
    <reaction evidence="1">
        <text>Release of the N-terminal residue from a tripeptide.</text>
        <dbReference type="EC" id="3.4.11.4"/>
    </reaction>
</comment>
<comment type="cofactor">
    <cofactor evidence="1">
        <name>Zn(2+)</name>
        <dbReference type="ChEBI" id="CHEBI:29105"/>
    </cofactor>
    <text evidence="1">Binds 2 Zn(2+) ions per subunit.</text>
</comment>
<comment type="subcellular location">
    <subcellularLocation>
        <location evidence="1">Cytoplasm</location>
    </subcellularLocation>
</comment>
<comment type="similarity">
    <text evidence="1">Belongs to the peptidase M20B family.</text>
</comment>
<protein>
    <recommendedName>
        <fullName evidence="1">Peptidase T</fullName>
        <ecNumber evidence="1">3.4.11.4</ecNumber>
    </recommendedName>
    <alternativeName>
        <fullName evidence="1">Aminotripeptidase</fullName>
        <shortName evidence="1">Tripeptidase</shortName>
    </alternativeName>
    <alternativeName>
        <fullName evidence="1">Tripeptide aminopeptidase</fullName>
    </alternativeName>
</protein>
<name>PEPT_SHIDS</name>
<proteinExistence type="inferred from homology"/>
<accession>Q32EY5</accession>
<evidence type="ECO:0000255" key="1">
    <source>
        <dbReference type="HAMAP-Rule" id="MF_00550"/>
    </source>
</evidence>
<reference key="1">
    <citation type="journal article" date="2005" name="Nucleic Acids Res.">
        <title>Genome dynamics and diversity of Shigella species, the etiologic agents of bacillary dysentery.</title>
        <authorList>
            <person name="Yang F."/>
            <person name="Yang J."/>
            <person name="Zhang X."/>
            <person name="Chen L."/>
            <person name="Jiang Y."/>
            <person name="Yan Y."/>
            <person name="Tang X."/>
            <person name="Wang J."/>
            <person name="Xiong Z."/>
            <person name="Dong J."/>
            <person name="Xue Y."/>
            <person name="Zhu Y."/>
            <person name="Xu X."/>
            <person name="Sun L."/>
            <person name="Chen S."/>
            <person name="Nie H."/>
            <person name="Peng J."/>
            <person name="Xu J."/>
            <person name="Wang Y."/>
            <person name="Yuan Z."/>
            <person name="Wen Y."/>
            <person name="Yao Z."/>
            <person name="Shen Y."/>
            <person name="Qiang B."/>
            <person name="Hou Y."/>
            <person name="Yu J."/>
            <person name="Jin Q."/>
        </authorList>
    </citation>
    <scope>NUCLEOTIDE SEQUENCE [LARGE SCALE GENOMIC DNA]</scope>
    <source>
        <strain>Sd197</strain>
    </source>
</reference>